<protein>
    <recommendedName>
        <fullName evidence="1">tRNA-specific 2-thiouridylase MnmA</fullName>
        <ecNumber evidence="1">2.8.1.13</ecNumber>
    </recommendedName>
</protein>
<keyword id="KW-0067">ATP-binding</keyword>
<keyword id="KW-0963">Cytoplasm</keyword>
<keyword id="KW-1015">Disulfide bond</keyword>
<keyword id="KW-0547">Nucleotide-binding</keyword>
<keyword id="KW-0694">RNA-binding</keyword>
<keyword id="KW-0808">Transferase</keyword>
<keyword id="KW-0819">tRNA processing</keyword>
<keyword id="KW-0820">tRNA-binding</keyword>
<organism>
    <name type="scientific">Yersinia pestis (strain Pestoides F)</name>
    <dbReference type="NCBI Taxonomy" id="386656"/>
    <lineage>
        <taxon>Bacteria</taxon>
        <taxon>Pseudomonadati</taxon>
        <taxon>Pseudomonadota</taxon>
        <taxon>Gammaproteobacteria</taxon>
        <taxon>Enterobacterales</taxon>
        <taxon>Yersiniaceae</taxon>
        <taxon>Yersinia</taxon>
    </lineage>
</organism>
<sequence length="371" mass="41366">MSDNSQKKVIVGMSGGVDSSVSAYLLQQQGYQVAGLFMKNWEEDDDEEYCSAATDLADAQAVCDKLGMELHTVNFAAEYWDNVFELFLAEYKAGRTPNPDILCNKEIKFKAFLEFAAEDLGADYIATGHYVRRQDVDGKSRLLRGLDGNKDQSYFLYTLSHEQIAQSLFPVGELEKPEVRRIAEQLDLVTAKKKDSTGICFIGERKFRDFLGRYLPAQPGPIMTVDGQLVGKHQGLMYHTLGQRKGLGIGGTKEGGDDPWYVVDKDLDSNTLLVAQGHEHPRLMSVGLVAQQLHWVDRQPVTAPFRCVVKTRYRQQDIPCTVTPLDDERVDVRFDDPVAAVTPGQSAVFYQGEICLGGGIIEQRYPLTNPA</sequence>
<feature type="chain" id="PRO_0000349863" description="tRNA-specific 2-thiouridylase MnmA">
    <location>
        <begin position="1"/>
        <end position="371"/>
    </location>
</feature>
<feature type="region of interest" description="Interaction with target base in tRNA" evidence="1">
    <location>
        <begin position="98"/>
        <end position="100"/>
    </location>
</feature>
<feature type="region of interest" description="Interaction with tRNA" evidence="1">
    <location>
        <begin position="150"/>
        <end position="152"/>
    </location>
</feature>
<feature type="region of interest" description="Interaction with tRNA" evidence="1">
    <location>
        <begin position="312"/>
        <end position="313"/>
    </location>
</feature>
<feature type="active site" description="Nucleophile" evidence="1">
    <location>
        <position position="103"/>
    </location>
</feature>
<feature type="active site" description="Cysteine persulfide intermediate" evidence="1">
    <location>
        <position position="200"/>
    </location>
</feature>
<feature type="binding site" evidence="1">
    <location>
        <begin position="12"/>
        <end position="19"/>
    </location>
    <ligand>
        <name>ATP</name>
        <dbReference type="ChEBI" id="CHEBI:30616"/>
    </ligand>
</feature>
<feature type="binding site" evidence="1">
    <location>
        <position position="38"/>
    </location>
    <ligand>
        <name>ATP</name>
        <dbReference type="ChEBI" id="CHEBI:30616"/>
    </ligand>
</feature>
<feature type="binding site" evidence="1">
    <location>
        <position position="128"/>
    </location>
    <ligand>
        <name>ATP</name>
        <dbReference type="ChEBI" id="CHEBI:30616"/>
    </ligand>
</feature>
<feature type="site" description="Interaction with tRNA" evidence="1">
    <location>
        <position position="129"/>
    </location>
</feature>
<feature type="site" description="Interaction with tRNA" evidence="1">
    <location>
        <position position="345"/>
    </location>
</feature>
<feature type="disulfide bond" description="Alternate" evidence="1">
    <location>
        <begin position="103"/>
        <end position="200"/>
    </location>
</feature>
<accession>A4TLN3</accession>
<name>MNMA_YERPP</name>
<dbReference type="EC" id="2.8.1.13" evidence="1"/>
<dbReference type="EMBL" id="CP000668">
    <property type="protein sequence ID" value="ABP40195.1"/>
    <property type="molecule type" value="Genomic_DNA"/>
</dbReference>
<dbReference type="RefSeq" id="WP_002210913.1">
    <property type="nucleotide sequence ID" value="NZ_CP009715.1"/>
</dbReference>
<dbReference type="SMR" id="A4TLN3"/>
<dbReference type="GeneID" id="57976935"/>
<dbReference type="KEGG" id="ypp:YPDSF_1810"/>
<dbReference type="PATRIC" id="fig|386656.14.peg.3265"/>
<dbReference type="GO" id="GO:0005737">
    <property type="term" value="C:cytoplasm"/>
    <property type="evidence" value="ECO:0007669"/>
    <property type="project" value="UniProtKB-SubCell"/>
</dbReference>
<dbReference type="GO" id="GO:0005524">
    <property type="term" value="F:ATP binding"/>
    <property type="evidence" value="ECO:0007669"/>
    <property type="project" value="UniProtKB-KW"/>
</dbReference>
<dbReference type="GO" id="GO:0000049">
    <property type="term" value="F:tRNA binding"/>
    <property type="evidence" value="ECO:0007669"/>
    <property type="project" value="UniProtKB-KW"/>
</dbReference>
<dbReference type="GO" id="GO:0103016">
    <property type="term" value="F:tRNA-uridine 2-sulfurtransferase activity"/>
    <property type="evidence" value="ECO:0007669"/>
    <property type="project" value="UniProtKB-EC"/>
</dbReference>
<dbReference type="GO" id="GO:0002143">
    <property type="term" value="P:tRNA wobble position uridine thiolation"/>
    <property type="evidence" value="ECO:0007669"/>
    <property type="project" value="TreeGrafter"/>
</dbReference>
<dbReference type="CDD" id="cd01998">
    <property type="entry name" value="MnmA_TRMU-like"/>
    <property type="match status" value="1"/>
</dbReference>
<dbReference type="FunFam" id="2.30.30.280:FF:000001">
    <property type="entry name" value="tRNA-specific 2-thiouridylase MnmA"/>
    <property type="match status" value="1"/>
</dbReference>
<dbReference type="FunFam" id="2.40.30.10:FF:000023">
    <property type="entry name" value="tRNA-specific 2-thiouridylase MnmA"/>
    <property type="match status" value="1"/>
</dbReference>
<dbReference type="FunFam" id="3.40.50.620:FF:000004">
    <property type="entry name" value="tRNA-specific 2-thiouridylase MnmA"/>
    <property type="match status" value="1"/>
</dbReference>
<dbReference type="Gene3D" id="2.30.30.280">
    <property type="entry name" value="Adenine nucleotide alpha hydrolases-like domains"/>
    <property type="match status" value="1"/>
</dbReference>
<dbReference type="Gene3D" id="3.40.50.620">
    <property type="entry name" value="HUPs"/>
    <property type="match status" value="1"/>
</dbReference>
<dbReference type="Gene3D" id="2.40.30.10">
    <property type="entry name" value="Translation factors"/>
    <property type="match status" value="1"/>
</dbReference>
<dbReference type="HAMAP" id="MF_00144">
    <property type="entry name" value="tRNA_thiouridyl_MnmA"/>
    <property type="match status" value="1"/>
</dbReference>
<dbReference type="InterPro" id="IPR004506">
    <property type="entry name" value="MnmA-like"/>
</dbReference>
<dbReference type="InterPro" id="IPR046885">
    <property type="entry name" value="MnmA-like_C"/>
</dbReference>
<dbReference type="InterPro" id="IPR046884">
    <property type="entry name" value="MnmA-like_central"/>
</dbReference>
<dbReference type="InterPro" id="IPR023382">
    <property type="entry name" value="MnmA-like_central_sf"/>
</dbReference>
<dbReference type="InterPro" id="IPR014729">
    <property type="entry name" value="Rossmann-like_a/b/a_fold"/>
</dbReference>
<dbReference type="NCBIfam" id="NF001138">
    <property type="entry name" value="PRK00143.1"/>
    <property type="match status" value="1"/>
</dbReference>
<dbReference type="NCBIfam" id="TIGR00420">
    <property type="entry name" value="trmU"/>
    <property type="match status" value="1"/>
</dbReference>
<dbReference type="PANTHER" id="PTHR11933:SF5">
    <property type="entry name" value="MITOCHONDRIAL TRNA-SPECIFIC 2-THIOURIDYLASE 1"/>
    <property type="match status" value="1"/>
</dbReference>
<dbReference type="PANTHER" id="PTHR11933">
    <property type="entry name" value="TRNA 5-METHYLAMINOMETHYL-2-THIOURIDYLATE -METHYLTRANSFERASE"/>
    <property type="match status" value="1"/>
</dbReference>
<dbReference type="Pfam" id="PF03054">
    <property type="entry name" value="tRNA_Me_trans"/>
    <property type="match status" value="1"/>
</dbReference>
<dbReference type="Pfam" id="PF20258">
    <property type="entry name" value="tRNA_Me_trans_C"/>
    <property type="match status" value="1"/>
</dbReference>
<dbReference type="Pfam" id="PF20259">
    <property type="entry name" value="tRNA_Me_trans_M"/>
    <property type="match status" value="1"/>
</dbReference>
<dbReference type="SUPFAM" id="SSF52402">
    <property type="entry name" value="Adenine nucleotide alpha hydrolases-like"/>
    <property type="match status" value="1"/>
</dbReference>
<evidence type="ECO:0000255" key="1">
    <source>
        <dbReference type="HAMAP-Rule" id="MF_00144"/>
    </source>
</evidence>
<reference key="1">
    <citation type="submission" date="2007-02" db="EMBL/GenBank/DDBJ databases">
        <title>Complete sequence of chromosome of Yersinia pestis Pestoides F.</title>
        <authorList>
            <consortium name="US DOE Joint Genome Institute"/>
            <person name="Copeland A."/>
            <person name="Lucas S."/>
            <person name="Lapidus A."/>
            <person name="Barry K."/>
            <person name="Detter J.C."/>
            <person name="Glavina del Rio T."/>
            <person name="Hammon N."/>
            <person name="Israni S."/>
            <person name="Dalin E."/>
            <person name="Tice H."/>
            <person name="Pitluck S."/>
            <person name="Di Bartolo G."/>
            <person name="Chain P."/>
            <person name="Malfatti S."/>
            <person name="Shin M."/>
            <person name="Vergez L."/>
            <person name="Schmutz J."/>
            <person name="Larimer F."/>
            <person name="Land M."/>
            <person name="Hauser L."/>
            <person name="Worsham P."/>
            <person name="Chu M."/>
            <person name="Bearden S."/>
            <person name="Garcia E."/>
            <person name="Richardson P."/>
        </authorList>
    </citation>
    <scope>NUCLEOTIDE SEQUENCE [LARGE SCALE GENOMIC DNA]</scope>
    <source>
        <strain>Pestoides F</strain>
    </source>
</reference>
<gene>
    <name evidence="1" type="primary">mnmA</name>
    <name type="ordered locus">YPDSF_1810</name>
</gene>
<proteinExistence type="inferred from homology"/>
<comment type="function">
    <text evidence="1">Catalyzes the 2-thiolation of uridine at the wobble position (U34) of tRNA(Lys), tRNA(Glu) and tRNA(Gln), leading to the formation of s(2)U34, the first step of tRNA-mnm(5)s(2)U34 synthesis. Sulfur is provided by IscS, via a sulfur-relay system. Binds ATP and its substrate tRNAs.</text>
</comment>
<comment type="catalytic activity">
    <reaction evidence="1">
        <text>S-sulfanyl-L-cysteinyl-[protein] + uridine(34) in tRNA + AH2 + ATP = 2-thiouridine(34) in tRNA + L-cysteinyl-[protein] + A + AMP + diphosphate + H(+)</text>
        <dbReference type="Rhea" id="RHEA:47032"/>
        <dbReference type="Rhea" id="RHEA-COMP:10131"/>
        <dbReference type="Rhea" id="RHEA-COMP:11726"/>
        <dbReference type="Rhea" id="RHEA-COMP:11727"/>
        <dbReference type="Rhea" id="RHEA-COMP:11728"/>
        <dbReference type="ChEBI" id="CHEBI:13193"/>
        <dbReference type="ChEBI" id="CHEBI:15378"/>
        <dbReference type="ChEBI" id="CHEBI:17499"/>
        <dbReference type="ChEBI" id="CHEBI:29950"/>
        <dbReference type="ChEBI" id="CHEBI:30616"/>
        <dbReference type="ChEBI" id="CHEBI:33019"/>
        <dbReference type="ChEBI" id="CHEBI:61963"/>
        <dbReference type="ChEBI" id="CHEBI:65315"/>
        <dbReference type="ChEBI" id="CHEBI:87170"/>
        <dbReference type="ChEBI" id="CHEBI:456215"/>
        <dbReference type="EC" id="2.8.1.13"/>
    </reaction>
</comment>
<comment type="subunit">
    <text evidence="1">Interacts with TusE.</text>
</comment>
<comment type="subcellular location">
    <subcellularLocation>
        <location evidence="1">Cytoplasm</location>
    </subcellularLocation>
</comment>
<comment type="similarity">
    <text evidence="1">Belongs to the MnmA/TRMU family.</text>
</comment>